<accession>Q3BAI0</accession>
<name>RK32_PHAAO</name>
<organism>
    <name type="scientific">Phalaenopsis aphrodite subsp. formosana</name>
    <name type="common">Moth orchid</name>
    <dbReference type="NCBI Taxonomy" id="308872"/>
    <lineage>
        <taxon>Eukaryota</taxon>
        <taxon>Viridiplantae</taxon>
        <taxon>Streptophyta</taxon>
        <taxon>Embryophyta</taxon>
        <taxon>Tracheophyta</taxon>
        <taxon>Spermatophyta</taxon>
        <taxon>Magnoliopsida</taxon>
        <taxon>Liliopsida</taxon>
        <taxon>Asparagales</taxon>
        <taxon>Orchidaceae</taxon>
        <taxon>Epidendroideae</taxon>
        <taxon>Vandeae</taxon>
        <taxon>Aeridinae</taxon>
        <taxon>Phalaenopsis</taxon>
    </lineage>
</organism>
<sequence length="57" mass="6379">MAVPKKRTSMSKKHIRRNLWKKKGSLAAVKAFSLAQSISTGQSKSFFVAQKKVLEKS</sequence>
<proteinExistence type="inferred from homology"/>
<keyword id="KW-0150">Chloroplast</keyword>
<keyword id="KW-0934">Plastid</keyword>
<keyword id="KW-0687">Ribonucleoprotein</keyword>
<keyword id="KW-0689">Ribosomal protein</keyword>
<protein>
    <recommendedName>
        <fullName evidence="1">Large ribosomal subunit protein bL32c</fullName>
    </recommendedName>
    <alternativeName>
        <fullName evidence="2">50S ribosomal protein L32, chloroplastic</fullName>
    </alternativeName>
</protein>
<gene>
    <name evidence="1" type="primary">rpl32</name>
</gene>
<evidence type="ECO:0000255" key="1">
    <source>
        <dbReference type="HAMAP-Rule" id="MF_00340"/>
    </source>
</evidence>
<evidence type="ECO:0000305" key="2"/>
<feature type="chain" id="PRO_0000276483" description="Large ribosomal subunit protein bL32c">
    <location>
        <begin position="1"/>
        <end position="57"/>
    </location>
</feature>
<geneLocation type="chloroplast"/>
<reference key="1">
    <citation type="journal article" date="2006" name="Mol. Biol. Evol.">
        <title>The chloroplast genome of Phalaenopsis aphrodite (Orchidaceae): comparative analysis of evolutionary rate with that of grasses and its phylogenetic implications.</title>
        <authorList>
            <person name="Chang C.-C."/>
            <person name="Lin H.-C."/>
            <person name="Lin I.-P."/>
            <person name="Chow T.-Y."/>
            <person name="Chen H.-H."/>
            <person name="Chen W.-H."/>
            <person name="Cheng C.-H."/>
            <person name="Lin C.-Y."/>
            <person name="Liu S.-M."/>
            <person name="Chang C.-C."/>
            <person name="Chaw S.-M."/>
        </authorList>
    </citation>
    <scope>NUCLEOTIDE SEQUENCE [LARGE SCALE GENOMIC DNA]</scope>
    <source>
        <strain>cv. Taisugar TS-97</strain>
    </source>
</reference>
<comment type="subcellular location">
    <subcellularLocation>
        <location>Plastid</location>
        <location>Chloroplast</location>
    </subcellularLocation>
</comment>
<comment type="similarity">
    <text evidence="1">Belongs to the bacterial ribosomal protein bL32 family.</text>
</comment>
<dbReference type="EMBL" id="AY916449">
    <property type="protein sequence ID" value="AAW82545.1"/>
    <property type="molecule type" value="Genomic_DNA"/>
</dbReference>
<dbReference type="RefSeq" id="YP_358638.1">
    <property type="nucleotide sequence ID" value="NC_007499.1"/>
</dbReference>
<dbReference type="SMR" id="Q3BAI0"/>
<dbReference type="GO" id="GO:0009507">
    <property type="term" value="C:chloroplast"/>
    <property type="evidence" value="ECO:0007669"/>
    <property type="project" value="UniProtKB-SubCell"/>
</dbReference>
<dbReference type="GO" id="GO:0015934">
    <property type="term" value="C:large ribosomal subunit"/>
    <property type="evidence" value="ECO:0007669"/>
    <property type="project" value="InterPro"/>
</dbReference>
<dbReference type="GO" id="GO:0003735">
    <property type="term" value="F:structural constituent of ribosome"/>
    <property type="evidence" value="ECO:0007669"/>
    <property type="project" value="InterPro"/>
</dbReference>
<dbReference type="GO" id="GO:0006412">
    <property type="term" value="P:translation"/>
    <property type="evidence" value="ECO:0007669"/>
    <property type="project" value="UniProtKB-UniRule"/>
</dbReference>
<dbReference type="HAMAP" id="MF_00340">
    <property type="entry name" value="Ribosomal_bL32"/>
    <property type="match status" value="1"/>
</dbReference>
<dbReference type="InterPro" id="IPR002677">
    <property type="entry name" value="Ribosomal_bL32"/>
</dbReference>
<dbReference type="InterPro" id="IPR044958">
    <property type="entry name" value="Ribosomal_bL32_plant/cyanobact"/>
</dbReference>
<dbReference type="InterPro" id="IPR011332">
    <property type="entry name" value="Ribosomal_zn-bd"/>
</dbReference>
<dbReference type="PANTHER" id="PTHR36083">
    <property type="entry name" value="50S RIBOSOMAL PROTEIN L32, CHLOROPLASTIC"/>
    <property type="match status" value="1"/>
</dbReference>
<dbReference type="PANTHER" id="PTHR36083:SF1">
    <property type="entry name" value="LARGE RIBOSOMAL SUBUNIT PROTEIN BL32C"/>
    <property type="match status" value="1"/>
</dbReference>
<dbReference type="Pfam" id="PF01783">
    <property type="entry name" value="Ribosomal_L32p"/>
    <property type="match status" value="1"/>
</dbReference>
<dbReference type="SUPFAM" id="SSF57829">
    <property type="entry name" value="Zn-binding ribosomal proteins"/>
    <property type="match status" value="1"/>
</dbReference>